<name>AAC32_SALSP</name>
<sequence>MHTRKAITEAIRKLGVQTGDLLMVHASLKAIGPVEGGAETVVAALRSAVGPTGTVMGYASWDRSPYEETLNGARLDDKARRTWPPFDPATAGTYRGFGLLNQFLVQAPGARRSAHPDASMVAVGPLAETLTEPHELGHALGEGSPVERFVRLGGKALLLGAPLNSVTALHYAEAVADIPNKRWVTYEMPMLGRNGEVAWKTASEYDSNGILDCFAIEGKPDAVETIANAYVKLGRHREGVVGFAQCYLFDAQDIVTFGVTYLEKHFGATPIVPAHEAAQRSCEPSG</sequence>
<protein>
    <recommendedName>
        <fullName>Aminoglycoside N(3)-acetyltransferase III</fullName>
        <ecNumber>2.3.1.81</ecNumber>
    </recommendedName>
    <alternativeName>
        <fullName>ACC(3)-III</fullName>
    </alternativeName>
    <alternativeName>
        <fullName>Aminocyclitol 3-N-acetyltransferase type III</fullName>
    </alternativeName>
    <alternativeName>
        <fullName>Gentamicin-(3)-N-acetyl-transferase</fullName>
    </alternativeName>
</protein>
<gene>
    <name type="primary">aacC3</name>
    <name type="synonym">aac3-VA</name>
    <name type="synonym">aacC2</name>
</gene>
<evidence type="ECO:0000305" key="1"/>
<accession>P0A255</accession>
<accession>P13245</accession>
<comment type="function">
    <text>Resistance to antibiotics containing the 2-deoxy-streptamine ring including gentamicin, kanamycin, tobramycin, neomycin and apramycin.</text>
</comment>
<comment type="catalytic activity">
    <reaction>
        <text>a 2-deoxystreptamine antibiotic + acetyl-CoA = an N(3)-acetyl-2-deoxystreptamine antibiotic + CoA + H(+)</text>
        <dbReference type="Rhea" id="RHEA:12665"/>
        <dbReference type="ChEBI" id="CHEBI:15378"/>
        <dbReference type="ChEBI" id="CHEBI:57287"/>
        <dbReference type="ChEBI" id="CHEBI:57288"/>
        <dbReference type="ChEBI" id="CHEBI:57921"/>
        <dbReference type="ChEBI" id="CHEBI:77452"/>
        <dbReference type="EC" id="2.3.1.81"/>
    </reaction>
</comment>
<comment type="similarity">
    <text evidence="1">Belongs to the antibiotic N-acetyltransferase family.</text>
</comment>
<proteinExistence type="inferred from homology"/>
<keyword id="KW-0012">Acyltransferase</keyword>
<keyword id="KW-0046">Antibiotic resistance</keyword>
<keyword id="KW-0614">Plasmid</keyword>
<keyword id="KW-0808">Transferase</keyword>
<dbReference type="EC" id="2.3.1.81"/>
<dbReference type="EMBL" id="X13541">
    <property type="protein sequence ID" value="CAA31891.1"/>
    <property type="molecule type" value="Genomic_DNA"/>
</dbReference>
<dbReference type="EMBL" id="X13542">
    <property type="protein sequence ID" value="CAA31893.1"/>
    <property type="molecule type" value="Genomic_DNA"/>
</dbReference>
<dbReference type="SMR" id="P0A255"/>
<dbReference type="GO" id="GO:0046353">
    <property type="term" value="F:aminoglycoside 3-N-acetyltransferase activity"/>
    <property type="evidence" value="ECO:0007669"/>
    <property type="project" value="UniProtKB-EC"/>
</dbReference>
<dbReference type="GO" id="GO:0046677">
    <property type="term" value="P:response to antibiotic"/>
    <property type="evidence" value="ECO:0007669"/>
    <property type="project" value="UniProtKB-KW"/>
</dbReference>
<dbReference type="InterPro" id="IPR003679">
    <property type="entry name" value="Amioglycoside_AcTrfase"/>
</dbReference>
<dbReference type="InterPro" id="IPR028345">
    <property type="entry name" value="Antibiotic_NAT-like"/>
</dbReference>
<dbReference type="NCBIfam" id="NF033082">
    <property type="entry name" value="AAC_3"/>
    <property type="match status" value="1"/>
</dbReference>
<dbReference type="NCBIfam" id="NF033080">
    <property type="entry name" value="AAC_3_II"/>
    <property type="match status" value="1"/>
</dbReference>
<dbReference type="PANTHER" id="PTHR11104">
    <property type="entry name" value="AMINOGLYCOSIDE N3-ACETYLTRANSFERASE"/>
    <property type="match status" value="1"/>
</dbReference>
<dbReference type="PANTHER" id="PTHR11104:SF0">
    <property type="entry name" value="SPBETA PROPHAGE-DERIVED AMINOGLYCOSIDE N(3')-ACETYLTRANSFERASE-LIKE PROTEIN YOKD"/>
    <property type="match status" value="1"/>
</dbReference>
<dbReference type="Pfam" id="PF02522">
    <property type="entry name" value="Antibiotic_NAT"/>
    <property type="match status" value="1"/>
</dbReference>
<dbReference type="SUPFAM" id="SSF110710">
    <property type="entry name" value="TTHA0583/YokD-like"/>
    <property type="match status" value="1"/>
</dbReference>
<geneLocation type="plasmid">
    <name>pWP116a</name>
</geneLocation>
<geneLocation type="plasmid">
    <name>pWP14a</name>
</geneLocation>
<reference key="1">
    <citation type="journal article" date="1985" name="Mol. Gen. Genet.">
        <title>Genes for gentamicin-(3)-N-acetyl-transferases III and IV. II. Nucleotide sequences of three AAC(3)-III genes and evolutionary aspects.</title>
        <authorList>
            <person name="Allmansberger R."/>
            <person name="Braeu B."/>
            <person name="Piepersberg W."/>
        </authorList>
    </citation>
    <scope>NUCLEOTIDE SEQUENCE [GENOMIC DNA]</scope>
    <source>
        <plasmid>pWP116a</plasmid>
        <plasmid>pWP14a</plasmid>
    </source>
</reference>
<feature type="chain" id="PRO_0000068544" description="Aminoglycoside N(3)-acetyltransferase III">
    <location>
        <begin position="1"/>
        <end position="286"/>
    </location>
</feature>
<organism>
    <name type="scientific">Salmonella sp</name>
    <dbReference type="NCBI Taxonomy" id="599"/>
    <lineage>
        <taxon>Bacteria</taxon>
        <taxon>Pseudomonadati</taxon>
        <taxon>Pseudomonadota</taxon>
        <taxon>Gammaproteobacteria</taxon>
        <taxon>Enterobacterales</taxon>
        <taxon>Enterobacteriaceae</taxon>
        <taxon>Salmonella</taxon>
    </lineage>
</organism>